<keyword id="KW-0963">Cytoplasm</keyword>
<keyword id="KW-0648">Protein biosynthesis</keyword>
<keyword id="KW-1185">Reference proteome</keyword>
<proteinExistence type="inferred from homology"/>
<gene>
    <name evidence="1" type="primary">frr</name>
    <name type="ordered locus">cu0821</name>
</gene>
<accession>B1VG92</accession>
<evidence type="ECO:0000255" key="1">
    <source>
        <dbReference type="HAMAP-Rule" id="MF_00040"/>
    </source>
</evidence>
<comment type="function">
    <text evidence="1">Responsible for the release of ribosomes from messenger RNA at the termination of protein biosynthesis. May increase the efficiency of translation by recycling ribosomes from one round of translation to another.</text>
</comment>
<comment type="subcellular location">
    <subcellularLocation>
        <location evidence="1">Cytoplasm</location>
    </subcellularLocation>
</comment>
<comment type="similarity">
    <text evidence="1">Belongs to the RRF family.</text>
</comment>
<sequence>MMDEILLECEERMTSSVEFAREDLTTIRTGRANPAMFNSVIAEYYGVPTPITQMATISVPEARMMLIKPYEQSQIQVIENAIRNSDLGVNPTNDGQVLRVTIPQLTEERRREMVRQAKSKGEDAKIAIRNIRRHGMEQLAKIQKDGDAGEDEVRASENELEKITSNYVKQVDELVERKEEELMEV</sequence>
<reference key="1">
    <citation type="journal article" date="2008" name="J. Biotechnol.">
        <title>The lifestyle of Corynebacterium urealyticum derived from its complete genome sequence established by pyrosequencing.</title>
        <authorList>
            <person name="Tauch A."/>
            <person name="Trost E."/>
            <person name="Tilker A."/>
            <person name="Ludewig U."/>
            <person name="Schneiker S."/>
            <person name="Goesmann A."/>
            <person name="Arnold W."/>
            <person name="Bekel T."/>
            <person name="Brinkrolf K."/>
            <person name="Brune I."/>
            <person name="Goetker S."/>
            <person name="Kalinowski J."/>
            <person name="Kamp P.-B."/>
            <person name="Lobo F.P."/>
            <person name="Viehoever P."/>
            <person name="Weisshaar B."/>
            <person name="Soriano F."/>
            <person name="Droege M."/>
            <person name="Puehler A."/>
        </authorList>
    </citation>
    <scope>NUCLEOTIDE SEQUENCE [LARGE SCALE GENOMIC DNA]</scope>
    <source>
        <strain>ATCC 43042 / DSM 7109</strain>
    </source>
</reference>
<feature type="chain" id="PRO_1000090730" description="Ribosome-recycling factor">
    <location>
        <begin position="1"/>
        <end position="185"/>
    </location>
</feature>
<protein>
    <recommendedName>
        <fullName evidence="1">Ribosome-recycling factor</fullName>
        <shortName evidence="1">RRF</shortName>
    </recommendedName>
    <alternativeName>
        <fullName evidence="1">Ribosome-releasing factor</fullName>
    </alternativeName>
</protein>
<dbReference type="EMBL" id="AM942444">
    <property type="protein sequence ID" value="CAQ04781.1"/>
    <property type="molecule type" value="Genomic_DNA"/>
</dbReference>
<dbReference type="RefSeq" id="WP_012360070.1">
    <property type="nucleotide sequence ID" value="NC_010545.1"/>
</dbReference>
<dbReference type="SMR" id="B1VG92"/>
<dbReference type="STRING" id="504474.cu0821"/>
<dbReference type="GeneID" id="60603598"/>
<dbReference type="KEGG" id="cur:cu0821"/>
<dbReference type="eggNOG" id="COG0233">
    <property type="taxonomic scope" value="Bacteria"/>
</dbReference>
<dbReference type="HOGENOM" id="CLU_073981_2_0_11"/>
<dbReference type="Proteomes" id="UP000001727">
    <property type="component" value="Chromosome"/>
</dbReference>
<dbReference type="GO" id="GO:0005737">
    <property type="term" value="C:cytoplasm"/>
    <property type="evidence" value="ECO:0007669"/>
    <property type="project" value="UniProtKB-SubCell"/>
</dbReference>
<dbReference type="GO" id="GO:0043023">
    <property type="term" value="F:ribosomal large subunit binding"/>
    <property type="evidence" value="ECO:0007669"/>
    <property type="project" value="TreeGrafter"/>
</dbReference>
<dbReference type="GO" id="GO:0006415">
    <property type="term" value="P:translational termination"/>
    <property type="evidence" value="ECO:0007669"/>
    <property type="project" value="UniProtKB-UniRule"/>
</dbReference>
<dbReference type="CDD" id="cd00520">
    <property type="entry name" value="RRF"/>
    <property type="match status" value="1"/>
</dbReference>
<dbReference type="FunFam" id="1.10.132.20:FF:000001">
    <property type="entry name" value="Ribosome-recycling factor"/>
    <property type="match status" value="1"/>
</dbReference>
<dbReference type="FunFam" id="3.30.1360.40:FF:000001">
    <property type="entry name" value="Ribosome-recycling factor"/>
    <property type="match status" value="1"/>
</dbReference>
<dbReference type="Gene3D" id="3.30.1360.40">
    <property type="match status" value="1"/>
</dbReference>
<dbReference type="Gene3D" id="1.10.132.20">
    <property type="entry name" value="Ribosome-recycling factor"/>
    <property type="match status" value="1"/>
</dbReference>
<dbReference type="HAMAP" id="MF_00040">
    <property type="entry name" value="RRF"/>
    <property type="match status" value="1"/>
</dbReference>
<dbReference type="InterPro" id="IPR002661">
    <property type="entry name" value="Ribosome_recyc_fac"/>
</dbReference>
<dbReference type="InterPro" id="IPR023584">
    <property type="entry name" value="Ribosome_recyc_fac_dom"/>
</dbReference>
<dbReference type="InterPro" id="IPR036191">
    <property type="entry name" value="RRF_sf"/>
</dbReference>
<dbReference type="NCBIfam" id="TIGR00496">
    <property type="entry name" value="frr"/>
    <property type="match status" value="1"/>
</dbReference>
<dbReference type="PANTHER" id="PTHR20982:SF3">
    <property type="entry name" value="MITOCHONDRIAL RIBOSOME RECYCLING FACTOR PSEUDO 1"/>
    <property type="match status" value="1"/>
</dbReference>
<dbReference type="PANTHER" id="PTHR20982">
    <property type="entry name" value="RIBOSOME RECYCLING FACTOR"/>
    <property type="match status" value="1"/>
</dbReference>
<dbReference type="Pfam" id="PF01765">
    <property type="entry name" value="RRF"/>
    <property type="match status" value="1"/>
</dbReference>
<dbReference type="SUPFAM" id="SSF55194">
    <property type="entry name" value="Ribosome recycling factor, RRF"/>
    <property type="match status" value="1"/>
</dbReference>
<name>RRF_CORU7</name>
<organism>
    <name type="scientific">Corynebacterium urealyticum (strain ATCC 43042 / DSM 7109)</name>
    <dbReference type="NCBI Taxonomy" id="504474"/>
    <lineage>
        <taxon>Bacteria</taxon>
        <taxon>Bacillati</taxon>
        <taxon>Actinomycetota</taxon>
        <taxon>Actinomycetes</taxon>
        <taxon>Mycobacteriales</taxon>
        <taxon>Corynebacteriaceae</taxon>
        <taxon>Corynebacterium</taxon>
    </lineage>
</organism>